<protein>
    <recommendedName>
        <fullName>Uncharacterized protein AF_0101</fullName>
    </recommendedName>
</protein>
<keyword id="KW-0472">Membrane</keyword>
<keyword id="KW-1185">Reference proteome</keyword>
<keyword id="KW-0812">Transmembrane</keyword>
<keyword id="KW-1133">Transmembrane helix</keyword>
<comment type="subcellular location">
    <subcellularLocation>
        <location evidence="2">Membrane</location>
        <topology evidence="2">Single-pass membrane protein</topology>
    </subcellularLocation>
</comment>
<reference key="1">
    <citation type="journal article" date="1997" name="Nature">
        <title>The complete genome sequence of the hyperthermophilic, sulphate-reducing archaeon Archaeoglobus fulgidus.</title>
        <authorList>
            <person name="Klenk H.-P."/>
            <person name="Clayton R.A."/>
            <person name="Tomb J.-F."/>
            <person name="White O."/>
            <person name="Nelson K.E."/>
            <person name="Ketchum K.A."/>
            <person name="Dodson R.J."/>
            <person name="Gwinn M.L."/>
            <person name="Hickey E.K."/>
            <person name="Peterson J.D."/>
            <person name="Richardson D.L."/>
            <person name="Kerlavage A.R."/>
            <person name="Graham D.E."/>
            <person name="Kyrpides N.C."/>
            <person name="Fleischmann R.D."/>
            <person name="Quackenbush J."/>
            <person name="Lee N.H."/>
            <person name="Sutton G.G."/>
            <person name="Gill S.R."/>
            <person name="Kirkness E.F."/>
            <person name="Dougherty B.A."/>
            <person name="McKenney K."/>
            <person name="Adams M.D."/>
            <person name="Loftus B.J."/>
            <person name="Peterson S.N."/>
            <person name="Reich C.I."/>
            <person name="McNeil L.K."/>
            <person name="Badger J.H."/>
            <person name="Glodek A."/>
            <person name="Zhou L."/>
            <person name="Overbeek R."/>
            <person name="Gocayne J.D."/>
            <person name="Weidman J.F."/>
            <person name="McDonald L.A."/>
            <person name="Utterback T.R."/>
            <person name="Cotton M.D."/>
            <person name="Spriggs T."/>
            <person name="Artiach P."/>
            <person name="Kaine B.P."/>
            <person name="Sykes S.M."/>
            <person name="Sadow P.W."/>
            <person name="D'Andrea K.P."/>
            <person name="Bowman C."/>
            <person name="Fujii C."/>
            <person name="Garland S.A."/>
            <person name="Mason T.M."/>
            <person name="Olsen G.J."/>
            <person name="Fraser C.M."/>
            <person name="Smith H.O."/>
            <person name="Woese C.R."/>
            <person name="Venter J.C."/>
        </authorList>
    </citation>
    <scope>NUCLEOTIDE SEQUENCE [LARGE SCALE GENOMIC DNA]</scope>
    <source>
        <strain>ATCC 49558 / DSM 4304 / JCM 9628 / NBRC 100126 / VC-16</strain>
    </source>
</reference>
<proteinExistence type="predicted"/>
<accession>O30135</accession>
<organism>
    <name type="scientific">Archaeoglobus fulgidus (strain ATCC 49558 / DSM 4304 / JCM 9628 / NBRC 100126 / VC-16)</name>
    <dbReference type="NCBI Taxonomy" id="224325"/>
    <lineage>
        <taxon>Archaea</taxon>
        <taxon>Methanobacteriati</taxon>
        <taxon>Methanobacteriota</taxon>
        <taxon>Archaeoglobi</taxon>
        <taxon>Archaeoglobales</taxon>
        <taxon>Archaeoglobaceae</taxon>
        <taxon>Archaeoglobus</taxon>
    </lineage>
</organism>
<feature type="chain" id="PRO_0000127831" description="Uncharacterized protein AF_0101">
    <location>
        <begin position="1"/>
        <end position="216"/>
    </location>
</feature>
<feature type="transmembrane region" description="Helical" evidence="1">
    <location>
        <begin position="7"/>
        <end position="29"/>
    </location>
</feature>
<sequence>MRRKNVILVIFFLIFFIGFEFSDMTLAFINLPSSYTYYVTSFDKKLPKNVTLIIPTCSLNGDIAEIKPLREGNISLLDTQYGKMIKIEAEEVGHITITSFISSEKTIDIINENITLSPILERELLSKTENKKELSMVYRVKIPVYAEFEGNSTIYVTLHVESGFKALPFFFTFTIPWEPRYGWKPYAGHKYLEVKITKKGWQLAEGEERVRLIFAV</sequence>
<evidence type="ECO:0000255" key="1"/>
<evidence type="ECO:0000305" key="2"/>
<name>Y101_ARCFU</name>
<gene>
    <name type="ordered locus">AF_0101</name>
</gene>
<dbReference type="EMBL" id="AE000782">
    <property type="protein sequence ID" value="AAB91129.1"/>
    <property type="molecule type" value="Genomic_DNA"/>
</dbReference>
<dbReference type="PIR" id="E69262">
    <property type="entry name" value="E69262"/>
</dbReference>
<dbReference type="RefSeq" id="WP_010877615.1">
    <property type="nucleotide sequence ID" value="NC_000917.1"/>
</dbReference>
<dbReference type="STRING" id="224325.AF_0101"/>
<dbReference type="PaxDb" id="224325-AF_0101"/>
<dbReference type="EnsemblBacteria" id="AAB91129">
    <property type="protein sequence ID" value="AAB91129"/>
    <property type="gene ID" value="AF_0101"/>
</dbReference>
<dbReference type="KEGG" id="afu:AF_0101"/>
<dbReference type="eggNOG" id="arCOG05283">
    <property type="taxonomic scope" value="Archaea"/>
</dbReference>
<dbReference type="HOGENOM" id="CLU_1275248_0_0_2"/>
<dbReference type="OrthoDB" id="162223at2157"/>
<dbReference type="Proteomes" id="UP000002199">
    <property type="component" value="Chromosome"/>
</dbReference>
<dbReference type="GO" id="GO:0016020">
    <property type="term" value="C:membrane"/>
    <property type="evidence" value="ECO:0007669"/>
    <property type="project" value="UniProtKB-SubCell"/>
</dbReference>